<reference key="1">
    <citation type="journal article" date="2009" name="Appl. Environ. Microbiol.">
        <title>Three genomes from the phylum Acidobacteria provide insight into the lifestyles of these microorganisms in soils.</title>
        <authorList>
            <person name="Ward N.L."/>
            <person name="Challacombe J.F."/>
            <person name="Janssen P.H."/>
            <person name="Henrissat B."/>
            <person name="Coutinho P.M."/>
            <person name="Wu M."/>
            <person name="Xie G."/>
            <person name="Haft D.H."/>
            <person name="Sait M."/>
            <person name="Badger J."/>
            <person name="Barabote R.D."/>
            <person name="Bradley B."/>
            <person name="Brettin T.S."/>
            <person name="Brinkac L.M."/>
            <person name="Bruce D."/>
            <person name="Creasy T."/>
            <person name="Daugherty S.C."/>
            <person name="Davidsen T.M."/>
            <person name="DeBoy R.T."/>
            <person name="Detter J.C."/>
            <person name="Dodson R.J."/>
            <person name="Durkin A.S."/>
            <person name="Ganapathy A."/>
            <person name="Gwinn-Giglio M."/>
            <person name="Han C.S."/>
            <person name="Khouri H."/>
            <person name="Kiss H."/>
            <person name="Kothari S.P."/>
            <person name="Madupu R."/>
            <person name="Nelson K.E."/>
            <person name="Nelson W.C."/>
            <person name="Paulsen I."/>
            <person name="Penn K."/>
            <person name="Ren Q."/>
            <person name="Rosovitz M.J."/>
            <person name="Selengut J.D."/>
            <person name="Shrivastava S."/>
            <person name="Sullivan S.A."/>
            <person name="Tapia R."/>
            <person name="Thompson L.S."/>
            <person name="Watkins K.L."/>
            <person name="Yang Q."/>
            <person name="Yu C."/>
            <person name="Zafar N."/>
            <person name="Zhou L."/>
            <person name="Kuske C.R."/>
        </authorList>
    </citation>
    <scope>NUCLEOTIDE SEQUENCE [LARGE SCALE GENOMIC DNA]</scope>
    <source>
        <strain>Ellin6076</strain>
    </source>
</reference>
<organism>
    <name type="scientific">Solibacter usitatus (strain Ellin6076)</name>
    <dbReference type="NCBI Taxonomy" id="234267"/>
    <lineage>
        <taxon>Bacteria</taxon>
        <taxon>Pseudomonadati</taxon>
        <taxon>Acidobacteriota</taxon>
        <taxon>Terriglobia</taxon>
        <taxon>Bryobacterales</taxon>
        <taxon>Solibacteraceae</taxon>
        <taxon>Candidatus Solibacter</taxon>
    </lineage>
</organism>
<protein>
    <recommendedName>
        <fullName evidence="1">Large ribosomal subunit protein uL2</fullName>
    </recommendedName>
    <alternativeName>
        <fullName evidence="3">50S ribosomal protein L2</fullName>
    </alternativeName>
</protein>
<dbReference type="EMBL" id="CP000473">
    <property type="protein sequence ID" value="ABJ86070.1"/>
    <property type="molecule type" value="Genomic_DNA"/>
</dbReference>
<dbReference type="SMR" id="Q01W95"/>
<dbReference type="FunCoup" id="Q01W95">
    <property type="interactions" value="852"/>
</dbReference>
<dbReference type="STRING" id="234267.Acid_5115"/>
<dbReference type="KEGG" id="sus:Acid_5115"/>
<dbReference type="eggNOG" id="COG0090">
    <property type="taxonomic scope" value="Bacteria"/>
</dbReference>
<dbReference type="HOGENOM" id="CLU_036235_2_1_0"/>
<dbReference type="InParanoid" id="Q01W95"/>
<dbReference type="OrthoDB" id="9778722at2"/>
<dbReference type="GO" id="GO:0015934">
    <property type="term" value="C:large ribosomal subunit"/>
    <property type="evidence" value="ECO:0007669"/>
    <property type="project" value="InterPro"/>
</dbReference>
<dbReference type="GO" id="GO:0019843">
    <property type="term" value="F:rRNA binding"/>
    <property type="evidence" value="ECO:0007669"/>
    <property type="project" value="UniProtKB-UniRule"/>
</dbReference>
<dbReference type="GO" id="GO:0003735">
    <property type="term" value="F:structural constituent of ribosome"/>
    <property type="evidence" value="ECO:0007669"/>
    <property type="project" value="InterPro"/>
</dbReference>
<dbReference type="GO" id="GO:0016740">
    <property type="term" value="F:transferase activity"/>
    <property type="evidence" value="ECO:0007669"/>
    <property type="project" value="InterPro"/>
</dbReference>
<dbReference type="GO" id="GO:0002181">
    <property type="term" value="P:cytoplasmic translation"/>
    <property type="evidence" value="ECO:0007669"/>
    <property type="project" value="TreeGrafter"/>
</dbReference>
<dbReference type="FunFam" id="2.30.30.30:FF:000001">
    <property type="entry name" value="50S ribosomal protein L2"/>
    <property type="match status" value="1"/>
</dbReference>
<dbReference type="FunFam" id="2.40.50.140:FF:000003">
    <property type="entry name" value="50S ribosomal protein L2"/>
    <property type="match status" value="1"/>
</dbReference>
<dbReference type="FunFam" id="4.10.950.10:FF:000001">
    <property type="entry name" value="50S ribosomal protein L2"/>
    <property type="match status" value="1"/>
</dbReference>
<dbReference type="Gene3D" id="2.30.30.30">
    <property type="match status" value="1"/>
</dbReference>
<dbReference type="Gene3D" id="2.40.50.140">
    <property type="entry name" value="Nucleic acid-binding proteins"/>
    <property type="match status" value="1"/>
</dbReference>
<dbReference type="Gene3D" id="4.10.950.10">
    <property type="entry name" value="Ribosomal protein L2, domain 3"/>
    <property type="match status" value="1"/>
</dbReference>
<dbReference type="HAMAP" id="MF_01320_B">
    <property type="entry name" value="Ribosomal_uL2_B"/>
    <property type="match status" value="1"/>
</dbReference>
<dbReference type="InterPro" id="IPR012340">
    <property type="entry name" value="NA-bd_OB-fold"/>
</dbReference>
<dbReference type="InterPro" id="IPR014722">
    <property type="entry name" value="Rib_uL2_dom2"/>
</dbReference>
<dbReference type="InterPro" id="IPR002171">
    <property type="entry name" value="Ribosomal_uL2"/>
</dbReference>
<dbReference type="InterPro" id="IPR005880">
    <property type="entry name" value="Ribosomal_uL2_bac/org-type"/>
</dbReference>
<dbReference type="InterPro" id="IPR022669">
    <property type="entry name" value="Ribosomal_uL2_C"/>
</dbReference>
<dbReference type="InterPro" id="IPR022671">
    <property type="entry name" value="Ribosomal_uL2_CS"/>
</dbReference>
<dbReference type="InterPro" id="IPR014726">
    <property type="entry name" value="Ribosomal_uL2_dom3"/>
</dbReference>
<dbReference type="InterPro" id="IPR022666">
    <property type="entry name" value="Ribosomal_uL2_RNA-bd_dom"/>
</dbReference>
<dbReference type="InterPro" id="IPR008991">
    <property type="entry name" value="Translation_prot_SH3-like_sf"/>
</dbReference>
<dbReference type="NCBIfam" id="TIGR01171">
    <property type="entry name" value="rplB_bact"/>
    <property type="match status" value="1"/>
</dbReference>
<dbReference type="PANTHER" id="PTHR13691:SF5">
    <property type="entry name" value="LARGE RIBOSOMAL SUBUNIT PROTEIN UL2M"/>
    <property type="match status" value="1"/>
</dbReference>
<dbReference type="PANTHER" id="PTHR13691">
    <property type="entry name" value="RIBOSOMAL PROTEIN L2"/>
    <property type="match status" value="1"/>
</dbReference>
<dbReference type="Pfam" id="PF00181">
    <property type="entry name" value="Ribosomal_L2"/>
    <property type="match status" value="1"/>
</dbReference>
<dbReference type="Pfam" id="PF03947">
    <property type="entry name" value="Ribosomal_L2_C"/>
    <property type="match status" value="1"/>
</dbReference>
<dbReference type="PIRSF" id="PIRSF002158">
    <property type="entry name" value="Ribosomal_L2"/>
    <property type="match status" value="1"/>
</dbReference>
<dbReference type="SMART" id="SM01383">
    <property type="entry name" value="Ribosomal_L2"/>
    <property type="match status" value="1"/>
</dbReference>
<dbReference type="SMART" id="SM01382">
    <property type="entry name" value="Ribosomal_L2_C"/>
    <property type="match status" value="1"/>
</dbReference>
<dbReference type="SUPFAM" id="SSF50249">
    <property type="entry name" value="Nucleic acid-binding proteins"/>
    <property type="match status" value="1"/>
</dbReference>
<dbReference type="SUPFAM" id="SSF50104">
    <property type="entry name" value="Translation proteins SH3-like domain"/>
    <property type="match status" value="1"/>
</dbReference>
<dbReference type="PROSITE" id="PS00467">
    <property type="entry name" value="RIBOSOMAL_L2"/>
    <property type="match status" value="1"/>
</dbReference>
<feature type="chain" id="PRO_0000310018" description="Large ribosomal subunit protein uL2">
    <location>
        <begin position="1"/>
        <end position="276"/>
    </location>
</feature>
<feature type="region of interest" description="Disordered" evidence="2">
    <location>
        <begin position="1"/>
        <end position="50"/>
    </location>
</feature>
<feature type="region of interest" description="Disordered" evidence="2">
    <location>
        <begin position="206"/>
        <end position="276"/>
    </location>
</feature>
<feature type="compositionally biased region" description="Polar residues" evidence="2">
    <location>
        <begin position="7"/>
        <end position="19"/>
    </location>
</feature>
<feature type="compositionally biased region" description="Basic and acidic residues" evidence="2">
    <location>
        <begin position="20"/>
        <end position="38"/>
    </location>
</feature>
<gene>
    <name evidence="1" type="primary">rplB</name>
    <name type="ordered locus">Acid_5115</name>
</gene>
<name>RL2_SOLUE</name>
<accession>Q01W95</accession>
<comment type="function">
    <text evidence="1">One of the primary rRNA binding proteins. Required for association of the 30S and 50S subunits to form the 70S ribosome, for tRNA binding and peptide bond formation. It has been suggested to have peptidyltransferase activity; this is somewhat controversial. Makes several contacts with the 16S rRNA in the 70S ribosome.</text>
</comment>
<comment type="subunit">
    <text evidence="1">Part of the 50S ribosomal subunit. Forms a bridge to the 30S subunit in the 70S ribosome.</text>
</comment>
<comment type="similarity">
    <text evidence="1">Belongs to the universal ribosomal protein uL2 family.</text>
</comment>
<evidence type="ECO:0000255" key="1">
    <source>
        <dbReference type="HAMAP-Rule" id="MF_01320"/>
    </source>
</evidence>
<evidence type="ECO:0000256" key="2">
    <source>
        <dbReference type="SAM" id="MobiDB-lite"/>
    </source>
</evidence>
<evidence type="ECO:0000305" key="3"/>
<proteinExistence type="inferred from homology"/>
<sequence length="276" mass="30070">MPIKSYRPTTPTRRFQTVVSREDITKQTPEKSLVESKKRSGGRNSTGRVTSRFIGGGAKKAYRVVDFKRDKAGIPAVVAAIEYDPNRSSRIALLNYVDGEKRYILQPDGLKVGMKIMSGPNADILIGNALPLKNIPAGTIVHNIELKPGKGGQMARSAGSQAQLVSREGGLALLKLPSGEIRRVAVECMATVGQVGNVDHENVSLGKAGRKRWMGKTPHNRGVSMNPVDHPHGGGEGKTSGGRHPVTPWGQPTRGFKTRNNKRTDKWIVNRKSKKR</sequence>
<keyword id="KW-0687">Ribonucleoprotein</keyword>
<keyword id="KW-0689">Ribosomal protein</keyword>
<keyword id="KW-0694">RNA-binding</keyword>
<keyword id="KW-0699">rRNA-binding</keyword>